<dbReference type="EC" id="6.5.1.2" evidence="1"/>
<dbReference type="EMBL" id="CP000001">
    <property type="protein sequence ID" value="AAU19960.1"/>
    <property type="molecule type" value="Genomic_DNA"/>
</dbReference>
<dbReference type="RefSeq" id="WP_000031443.1">
    <property type="nucleotide sequence ID" value="NC_006274.1"/>
</dbReference>
<dbReference type="SMR" id="Q63GS3"/>
<dbReference type="KEGG" id="bcz:BCE33L0279"/>
<dbReference type="PATRIC" id="fig|288681.22.peg.5330"/>
<dbReference type="Proteomes" id="UP000002612">
    <property type="component" value="Chromosome"/>
</dbReference>
<dbReference type="GO" id="GO:0005829">
    <property type="term" value="C:cytosol"/>
    <property type="evidence" value="ECO:0007669"/>
    <property type="project" value="TreeGrafter"/>
</dbReference>
<dbReference type="GO" id="GO:0003677">
    <property type="term" value="F:DNA binding"/>
    <property type="evidence" value="ECO:0007669"/>
    <property type="project" value="InterPro"/>
</dbReference>
<dbReference type="GO" id="GO:0003911">
    <property type="term" value="F:DNA ligase (NAD+) activity"/>
    <property type="evidence" value="ECO:0007669"/>
    <property type="project" value="UniProtKB-UniRule"/>
</dbReference>
<dbReference type="GO" id="GO:0046872">
    <property type="term" value="F:metal ion binding"/>
    <property type="evidence" value="ECO:0007669"/>
    <property type="project" value="UniProtKB-KW"/>
</dbReference>
<dbReference type="GO" id="GO:0006281">
    <property type="term" value="P:DNA repair"/>
    <property type="evidence" value="ECO:0007669"/>
    <property type="project" value="UniProtKB-KW"/>
</dbReference>
<dbReference type="GO" id="GO:0006260">
    <property type="term" value="P:DNA replication"/>
    <property type="evidence" value="ECO:0007669"/>
    <property type="project" value="UniProtKB-KW"/>
</dbReference>
<dbReference type="CDD" id="cd17748">
    <property type="entry name" value="BRCT_DNA_ligase_like"/>
    <property type="match status" value="1"/>
</dbReference>
<dbReference type="CDD" id="cd00114">
    <property type="entry name" value="LIGANc"/>
    <property type="match status" value="1"/>
</dbReference>
<dbReference type="FunFam" id="1.10.150.20:FF:000006">
    <property type="entry name" value="DNA ligase"/>
    <property type="match status" value="1"/>
</dbReference>
<dbReference type="FunFam" id="1.10.150.20:FF:000007">
    <property type="entry name" value="DNA ligase"/>
    <property type="match status" value="1"/>
</dbReference>
<dbReference type="FunFam" id="1.10.287.610:FF:000002">
    <property type="entry name" value="DNA ligase"/>
    <property type="match status" value="1"/>
</dbReference>
<dbReference type="FunFam" id="2.40.50.140:FF:000012">
    <property type="entry name" value="DNA ligase"/>
    <property type="match status" value="1"/>
</dbReference>
<dbReference type="FunFam" id="3.30.470.30:FF:000001">
    <property type="entry name" value="DNA ligase"/>
    <property type="match status" value="1"/>
</dbReference>
<dbReference type="FunFam" id="3.40.50.10190:FF:000026">
    <property type="entry name" value="DNA ligase"/>
    <property type="match status" value="1"/>
</dbReference>
<dbReference type="FunFam" id="6.20.10.30:FF:000002">
    <property type="entry name" value="DNA ligase"/>
    <property type="match status" value="1"/>
</dbReference>
<dbReference type="Gene3D" id="6.20.10.30">
    <property type="match status" value="1"/>
</dbReference>
<dbReference type="Gene3D" id="1.10.150.20">
    <property type="entry name" value="5' to 3' exonuclease, C-terminal subdomain"/>
    <property type="match status" value="2"/>
</dbReference>
<dbReference type="Gene3D" id="3.40.50.10190">
    <property type="entry name" value="BRCT domain"/>
    <property type="match status" value="1"/>
</dbReference>
<dbReference type="Gene3D" id="3.30.470.30">
    <property type="entry name" value="DNA ligase/mRNA capping enzyme"/>
    <property type="match status" value="1"/>
</dbReference>
<dbReference type="Gene3D" id="1.10.287.610">
    <property type="entry name" value="Helix hairpin bin"/>
    <property type="match status" value="1"/>
</dbReference>
<dbReference type="Gene3D" id="2.40.50.140">
    <property type="entry name" value="Nucleic acid-binding proteins"/>
    <property type="match status" value="1"/>
</dbReference>
<dbReference type="HAMAP" id="MF_01588">
    <property type="entry name" value="DNA_ligase_A"/>
    <property type="match status" value="1"/>
</dbReference>
<dbReference type="InterPro" id="IPR001357">
    <property type="entry name" value="BRCT_dom"/>
</dbReference>
<dbReference type="InterPro" id="IPR036420">
    <property type="entry name" value="BRCT_dom_sf"/>
</dbReference>
<dbReference type="InterPro" id="IPR041663">
    <property type="entry name" value="DisA/LigA_HHH"/>
</dbReference>
<dbReference type="InterPro" id="IPR001679">
    <property type="entry name" value="DNA_ligase"/>
</dbReference>
<dbReference type="InterPro" id="IPR018239">
    <property type="entry name" value="DNA_ligase_AS"/>
</dbReference>
<dbReference type="InterPro" id="IPR033136">
    <property type="entry name" value="DNA_ligase_CS"/>
</dbReference>
<dbReference type="InterPro" id="IPR013839">
    <property type="entry name" value="DNAligase_adenylation"/>
</dbReference>
<dbReference type="InterPro" id="IPR013840">
    <property type="entry name" value="DNAligase_N"/>
</dbReference>
<dbReference type="InterPro" id="IPR003583">
    <property type="entry name" value="Hlx-hairpin-Hlx_DNA-bd_motif"/>
</dbReference>
<dbReference type="InterPro" id="IPR012340">
    <property type="entry name" value="NA-bd_OB-fold"/>
</dbReference>
<dbReference type="InterPro" id="IPR004150">
    <property type="entry name" value="NAD_DNA_ligase_OB"/>
</dbReference>
<dbReference type="InterPro" id="IPR010994">
    <property type="entry name" value="RuvA_2-like"/>
</dbReference>
<dbReference type="InterPro" id="IPR004149">
    <property type="entry name" value="Znf_DNAligase_C4"/>
</dbReference>
<dbReference type="NCBIfam" id="TIGR00575">
    <property type="entry name" value="dnlj"/>
    <property type="match status" value="1"/>
</dbReference>
<dbReference type="NCBIfam" id="NF005932">
    <property type="entry name" value="PRK07956.1"/>
    <property type="match status" value="1"/>
</dbReference>
<dbReference type="PANTHER" id="PTHR23389">
    <property type="entry name" value="CHROMOSOME TRANSMISSION FIDELITY FACTOR 18"/>
    <property type="match status" value="1"/>
</dbReference>
<dbReference type="PANTHER" id="PTHR23389:SF9">
    <property type="entry name" value="DNA LIGASE"/>
    <property type="match status" value="1"/>
</dbReference>
<dbReference type="Pfam" id="PF00533">
    <property type="entry name" value="BRCT"/>
    <property type="match status" value="1"/>
</dbReference>
<dbReference type="Pfam" id="PF01653">
    <property type="entry name" value="DNA_ligase_aden"/>
    <property type="match status" value="1"/>
</dbReference>
<dbReference type="Pfam" id="PF03120">
    <property type="entry name" value="DNA_ligase_OB"/>
    <property type="match status" value="1"/>
</dbReference>
<dbReference type="Pfam" id="PF03119">
    <property type="entry name" value="DNA_ligase_ZBD"/>
    <property type="match status" value="1"/>
</dbReference>
<dbReference type="Pfam" id="PF12826">
    <property type="entry name" value="HHH_2"/>
    <property type="match status" value="1"/>
</dbReference>
<dbReference type="Pfam" id="PF14520">
    <property type="entry name" value="HHH_5"/>
    <property type="match status" value="1"/>
</dbReference>
<dbReference type="Pfam" id="PF22745">
    <property type="entry name" value="Nlig-Ia"/>
    <property type="match status" value="1"/>
</dbReference>
<dbReference type="PIRSF" id="PIRSF001604">
    <property type="entry name" value="LigA"/>
    <property type="match status" value="1"/>
</dbReference>
<dbReference type="SMART" id="SM00292">
    <property type="entry name" value="BRCT"/>
    <property type="match status" value="1"/>
</dbReference>
<dbReference type="SMART" id="SM00278">
    <property type="entry name" value="HhH1"/>
    <property type="match status" value="3"/>
</dbReference>
<dbReference type="SMART" id="SM00532">
    <property type="entry name" value="LIGANc"/>
    <property type="match status" value="1"/>
</dbReference>
<dbReference type="SUPFAM" id="SSF52113">
    <property type="entry name" value="BRCT domain"/>
    <property type="match status" value="1"/>
</dbReference>
<dbReference type="SUPFAM" id="SSF56091">
    <property type="entry name" value="DNA ligase/mRNA capping enzyme, catalytic domain"/>
    <property type="match status" value="1"/>
</dbReference>
<dbReference type="SUPFAM" id="SSF50249">
    <property type="entry name" value="Nucleic acid-binding proteins"/>
    <property type="match status" value="1"/>
</dbReference>
<dbReference type="SUPFAM" id="SSF47781">
    <property type="entry name" value="RuvA domain 2-like"/>
    <property type="match status" value="1"/>
</dbReference>
<dbReference type="PROSITE" id="PS50172">
    <property type="entry name" value="BRCT"/>
    <property type="match status" value="1"/>
</dbReference>
<dbReference type="PROSITE" id="PS01055">
    <property type="entry name" value="DNA_LIGASE_N1"/>
    <property type="match status" value="1"/>
</dbReference>
<dbReference type="PROSITE" id="PS01056">
    <property type="entry name" value="DNA_LIGASE_N2"/>
    <property type="match status" value="1"/>
</dbReference>
<reference key="1">
    <citation type="journal article" date="2006" name="J. Bacteriol.">
        <title>Pathogenomic sequence analysis of Bacillus cereus and Bacillus thuringiensis isolates closely related to Bacillus anthracis.</title>
        <authorList>
            <person name="Han C.S."/>
            <person name="Xie G."/>
            <person name="Challacombe J.F."/>
            <person name="Altherr M.R."/>
            <person name="Bhotika S.S."/>
            <person name="Bruce D."/>
            <person name="Campbell C.S."/>
            <person name="Campbell M.L."/>
            <person name="Chen J."/>
            <person name="Chertkov O."/>
            <person name="Cleland C."/>
            <person name="Dimitrijevic M."/>
            <person name="Doggett N.A."/>
            <person name="Fawcett J.J."/>
            <person name="Glavina T."/>
            <person name="Goodwin L.A."/>
            <person name="Hill K.K."/>
            <person name="Hitchcock P."/>
            <person name="Jackson P.J."/>
            <person name="Keim P."/>
            <person name="Kewalramani A.R."/>
            <person name="Longmire J."/>
            <person name="Lucas S."/>
            <person name="Malfatti S."/>
            <person name="McMurry K."/>
            <person name="Meincke L.J."/>
            <person name="Misra M."/>
            <person name="Moseman B.L."/>
            <person name="Mundt M."/>
            <person name="Munk A.C."/>
            <person name="Okinaka R.T."/>
            <person name="Parson-Quintana B."/>
            <person name="Reilly L.P."/>
            <person name="Richardson P."/>
            <person name="Robinson D.L."/>
            <person name="Rubin E."/>
            <person name="Saunders E."/>
            <person name="Tapia R."/>
            <person name="Tesmer J.G."/>
            <person name="Thayer N."/>
            <person name="Thompson L.S."/>
            <person name="Tice H."/>
            <person name="Ticknor L.O."/>
            <person name="Wills P.L."/>
            <person name="Brettin T.S."/>
            <person name="Gilna P."/>
        </authorList>
    </citation>
    <scope>NUCLEOTIDE SEQUENCE [LARGE SCALE GENOMIC DNA]</scope>
    <source>
        <strain>ZK / E33L</strain>
    </source>
</reference>
<comment type="function">
    <text evidence="1">DNA ligase that catalyzes the formation of phosphodiester linkages between 5'-phosphoryl and 3'-hydroxyl groups in double-stranded DNA using NAD as a coenzyme and as the energy source for the reaction. It is essential for DNA replication and repair of damaged DNA.</text>
</comment>
<comment type="catalytic activity">
    <reaction evidence="1">
        <text>NAD(+) + (deoxyribonucleotide)n-3'-hydroxyl + 5'-phospho-(deoxyribonucleotide)m = (deoxyribonucleotide)n+m + AMP + beta-nicotinamide D-nucleotide.</text>
        <dbReference type="EC" id="6.5.1.2"/>
    </reaction>
</comment>
<comment type="cofactor">
    <cofactor evidence="1">
        <name>Mg(2+)</name>
        <dbReference type="ChEBI" id="CHEBI:18420"/>
    </cofactor>
    <cofactor evidence="1">
        <name>Mn(2+)</name>
        <dbReference type="ChEBI" id="CHEBI:29035"/>
    </cofactor>
</comment>
<comment type="similarity">
    <text evidence="1">Belongs to the NAD-dependent DNA ligase family. LigA subfamily.</text>
</comment>
<organism>
    <name type="scientific">Bacillus cereus (strain ZK / E33L)</name>
    <dbReference type="NCBI Taxonomy" id="288681"/>
    <lineage>
        <taxon>Bacteria</taxon>
        <taxon>Bacillati</taxon>
        <taxon>Bacillota</taxon>
        <taxon>Bacilli</taxon>
        <taxon>Bacillales</taxon>
        <taxon>Bacillaceae</taxon>
        <taxon>Bacillus</taxon>
        <taxon>Bacillus cereus group</taxon>
    </lineage>
</organism>
<protein>
    <recommendedName>
        <fullName evidence="1">DNA ligase</fullName>
        <ecNumber evidence="1">6.5.1.2</ecNumber>
    </recommendedName>
    <alternativeName>
        <fullName evidence="1">Polydeoxyribonucleotide synthase [NAD(+)]</fullName>
    </alternativeName>
</protein>
<proteinExistence type="inferred from homology"/>
<gene>
    <name evidence="1" type="primary">ligA</name>
    <name type="ordered locus">BCE33L0279</name>
</gene>
<sequence>MSKEIAKKRIEELRDLLNTFNYQYHVLDNPSVSDAEYDRNMQELIKLEAENPEFMSEDSPSVRVGGTVLDIFEKVTHKSPMLSLGNAFNEGDLRDFDRRVRQGIDDANVRYICELKIDGLAVSLHYEKGRFIQGATRGDGVTGEDITQNLKTIKAIPLRLNEEVTLEARGEAYMPKRSFVKLNEEKEQNGEDVFANPRNAAAGSIRQLDPKIAAKRNLSMFVYGLANVEEKTIPSHSESLDFLGELGFKTNPNRRTCETIEEVIAYVEEWQEKRPHLDYEIDGIVIKVDDVALQESLGTTAKSPRWAIAYKFPAEEVVTRLTGIELSVGRTGVVTPTAELEPVRVAGTIVRRASLHNEDLIREKDIRIGDYVVVKKAGDIIPEVVNVIFDKRTGEEEEYHMPTHCPACESELVRLEEEVALRCINPTCPAQIREGLIHFVSRNAMNIDGLGERVITQLFDADYIRTFADLYSLTKEQLLQLERFGEKSATNLVQAIENSKENSLERLLFGLGIRHVGAKAARTFAEHFETMDALVKATEEELKTINEIGEKMAQSVVAYFDNEDVLELLQQFKEYGVNMTYKGIKIADLQNVESYFAGKTVVLTGKLEVMGRSEAKKKIEALGGKVTGSVSKSTDLVVAGEAAGSKLAQAEKHNVEVWNEERFLQELNK</sequence>
<feature type="chain" id="PRO_0000313125" description="DNA ligase">
    <location>
        <begin position="1"/>
        <end position="669"/>
    </location>
</feature>
<feature type="domain" description="BRCT" evidence="1">
    <location>
        <begin position="591"/>
        <end position="669"/>
    </location>
</feature>
<feature type="active site" description="N6-AMP-lysine intermediate" evidence="1">
    <location>
        <position position="116"/>
    </location>
</feature>
<feature type="binding site" evidence="1">
    <location>
        <begin position="34"/>
        <end position="38"/>
    </location>
    <ligand>
        <name>NAD(+)</name>
        <dbReference type="ChEBI" id="CHEBI:57540"/>
    </ligand>
</feature>
<feature type="binding site" evidence="1">
    <location>
        <begin position="83"/>
        <end position="84"/>
    </location>
    <ligand>
        <name>NAD(+)</name>
        <dbReference type="ChEBI" id="CHEBI:57540"/>
    </ligand>
</feature>
<feature type="binding site" evidence="1">
    <location>
        <position position="114"/>
    </location>
    <ligand>
        <name>NAD(+)</name>
        <dbReference type="ChEBI" id="CHEBI:57540"/>
    </ligand>
</feature>
<feature type="binding site" evidence="1">
    <location>
        <position position="137"/>
    </location>
    <ligand>
        <name>NAD(+)</name>
        <dbReference type="ChEBI" id="CHEBI:57540"/>
    </ligand>
</feature>
<feature type="binding site" evidence="1">
    <location>
        <position position="171"/>
    </location>
    <ligand>
        <name>NAD(+)</name>
        <dbReference type="ChEBI" id="CHEBI:57540"/>
    </ligand>
</feature>
<feature type="binding site" evidence="1">
    <location>
        <position position="287"/>
    </location>
    <ligand>
        <name>NAD(+)</name>
        <dbReference type="ChEBI" id="CHEBI:57540"/>
    </ligand>
</feature>
<feature type="binding site" evidence="1">
    <location>
        <position position="311"/>
    </location>
    <ligand>
        <name>NAD(+)</name>
        <dbReference type="ChEBI" id="CHEBI:57540"/>
    </ligand>
</feature>
<feature type="binding site" evidence="1">
    <location>
        <position position="405"/>
    </location>
    <ligand>
        <name>Zn(2+)</name>
        <dbReference type="ChEBI" id="CHEBI:29105"/>
    </ligand>
</feature>
<feature type="binding site" evidence="1">
    <location>
        <position position="408"/>
    </location>
    <ligand>
        <name>Zn(2+)</name>
        <dbReference type="ChEBI" id="CHEBI:29105"/>
    </ligand>
</feature>
<feature type="binding site" evidence="1">
    <location>
        <position position="423"/>
    </location>
    <ligand>
        <name>Zn(2+)</name>
        <dbReference type="ChEBI" id="CHEBI:29105"/>
    </ligand>
</feature>
<feature type="binding site" evidence="1">
    <location>
        <position position="428"/>
    </location>
    <ligand>
        <name>Zn(2+)</name>
        <dbReference type="ChEBI" id="CHEBI:29105"/>
    </ligand>
</feature>
<keyword id="KW-0227">DNA damage</keyword>
<keyword id="KW-0234">DNA repair</keyword>
<keyword id="KW-0235">DNA replication</keyword>
<keyword id="KW-0436">Ligase</keyword>
<keyword id="KW-0460">Magnesium</keyword>
<keyword id="KW-0464">Manganese</keyword>
<keyword id="KW-0479">Metal-binding</keyword>
<keyword id="KW-0520">NAD</keyword>
<keyword id="KW-0862">Zinc</keyword>
<accession>Q63GS3</accession>
<name>DNLJ_BACCZ</name>
<evidence type="ECO:0000255" key="1">
    <source>
        <dbReference type="HAMAP-Rule" id="MF_01588"/>
    </source>
</evidence>